<feature type="chain" id="PRO_0000203881" description="DNA-binding protein Fis">
    <location>
        <begin position="1"/>
        <end position="98"/>
    </location>
</feature>
<feature type="DNA-binding region" description="H-T-H motif" evidence="1">
    <location>
        <begin position="74"/>
        <end position="93"/>
    </location>
</feature>
<accession>O52540</accession>
<protein>
    <recommendedName>
        <fullName evidence="1">DNA-binding protein Fis</fullName>
    </recommendedName>
</protein>
<organism>
    <name type="scientific">Pectobacterium carotovorum</name>
    <name type="common">Erwinia carotovora</name>
    <dbReference type="NCBI Taxonomy" id="554"/>
    <lineage>
        <taxon>Bacteria</taxon>
        <taxon>Pseudomonadati</taxon>
        <taxon>Pseudomonadota</taxon>
        <taxon>Gammaproteobacteria</taxon>
        <taxon>Enterobacterales</taxon>
        <taxon>Pectobacteriaceae</taxon>
        <taxon>Pectobacterium</taxon>
    </lineage>
</organism>
<reference key="1">
    <citation type="journal article" date="1998" name="J. Bacteriol.">
        <title>Identification and characterization of the fis operon in enteric bacteria.</title>
        <authorList>
            <person name="Beach M.B."/>
            <person name="Osuna R."/>
        </authorList>
    </citation>
    <scope>NUCLEOTIDE SEQUENCE [GENOMIC DNA]</scope>
</reference>
<gene>
    <name evidence="1" type="primary">fis</name>
</gene>
<comment type="function">
    <text evidence="1">Activates ribosomal RNA transcription. Plays a direct role in upstream activation of rRNA promoters.</text>
</comment>
<comment type="subunit">
    <text evidence="1">Homodimer.</text>
</comment>
<comment type="similarity">
    <text evidence="1">Belongs to the transcriptional regulatory Fis family.</text>
</comment>
<evidence type="ECO:0000255" key="1">
    <source>
        <dbReference type="HAMAP-Rule" id="MF_00166"/>
    </source>
</evidence>
<dbReference type="EMBL" id="AF040381">
    <property type="protein sequence ID" value="AAC77893.1"/>
    <property type="molecule type" value="Genomic_DNA"/>
</dbReference>
<dbReference type="RefSeq" id="WP_005975342.1">
    <property type="nucleotide sequence ID" value="NZ_QZDJ01000034.1"/>
</dbReference>
<dbReference type="SMR" id="O52540"/>
<dbReference type="GeneID" id="93388326"/>
<dbReference type="OMA" id="LCEVEAP"/>
<dbReference type="OrthoDB" id="9802388at2"/>
<dbReference type="GO" id="GO:0003700">
    <property type="term" value="F:DNA-binding transcription factor activity"/>
    <property type="evidence" value="ECO:0007669"/>
    <property type="project" value="UniProtKB-UniRule"/>
</dbReference>
<dbReference type="GO" id="GO:0043565">
    <property type="term" value="F:sequence-specific DNA binding"/>
    <property type="evidence" value="ECO:0007669"/>
    <property type="project" value="InterPro"/>
</dbReference>
<dbReference type="FunFam" id="1.10.10.60:FF:000006">
    <property type="entry name" value="DNA-binding protein Fis"/>
    <property type="match status" value="1"/>
</dbReference>
<dbReference type="Gene3D" id="1.10.10.60">
    <property type="entry name" value="Homeodomain-like"/>
    <property type="match status" value="1"/>
</dbReference>
<dbReference type="HAMAP" id="MF_00166">
    <property type="entry name" value="DNA_binding_Fis"/>
    <property type="match status" value="1"/>
</dbReference>
<dbReference type="InterPro" id="IPR005412">
    <property type="entry name" value="Fis_DNA-bd"/>
</dbReference>
<dbReference type="InterPro" id="IPR009057">
    <property type="entry name" value="Homeodomain-like_sf"/>
</dbReference>
<dbReference type="InterPro" id="IPR002197">
    <property type="entry name" value="HTH_Fis"/>
</dbReference>
<dbReference type="InterPro" id="IPR050207">
    <property type="entry name" value="Trans_regulatory_Fis"/>
</dbReference>
<dbReference type="NCBIfam" id="NF001659">
    <property type="entry name" value="PRK00430.1"/>
    <property type="match status" value="1"/>
</dbReference>
<dbReference type="PANTHER" id="PTHR47918">
    <property type="entry name" value="DNA-BINDING PROTEIN FIS"/>
    <property type="match status" value="1"/>
</dbReference>
<dbReference type="PANTHER" id="PTHR47918:SF1">
    <property type="entry name" value="DNA-BINDING PROTEIN FIS"/>
    <property type="match status" value="1"/>
</dbReference>
<dbReference type="Pfam" id="PF02954">
    <property type="entry name" value="HTH_8"/>
    <property type="match status" value="1"/>
</dbReference>
<dbReference type="PIRSF" id="PIRSF002097">
    <property type="entry name" value="DNA-binding_Fis"/>
    <property type="match status" value="1"/>
</dbReference>
<dbReference type="PRINTS" id="PR01591">
    <property type="entry name" value="DNABINDNGFIS"/>
</dbReference>
<dbReference type="PRINTS" id="PR01590">
    <property type="entry name" value="HTHFIS"/>
</dbReference>
<dbReference type="SUPFAM" id="SSF46689">
    <property type="entry name" value="Homeodomain-like"/>
    <property type="match status" value="1"/>
</dbReference>
<name>FIS_PECCA</name>
<proteinExistence type="inferred from homology"/>
<sequence length="98" mass="11169">MFEQRVNSDVLTVSTVNSQAQVTQKPLRDSVKQALKNYFAQLNGQDVSDLYELVLAEVEQPLLDMVMQYTRGNQTRAALMMGINRGTLRKKLKKYGMN</sequence>
<keyword id="KW-0010">Activator</keyword>
<keyword id="KW-0238">DNA-binding</keyword>
<keyword id="KW-0804">Transcription</keyword>
<keyword id="KW-0805">Transcription regulation</keyword>